<name>RS21_DROAN</name>
<accession>B3MLA8</accession>
<reference evidence="6" key="1">
    <citation type="journal article" date="2007" name="Nature">
        <title>Evolution of genes and genomes on the Drosophila phylogeny.</title>
        <authorList>
            <consortium name="Drosophila 12 genomes consortium"/>
        </authorList>
    </citation>
    <scope>NUCLEOTIDE SEQUENCE [LARGE SCALE GENOMIC DNA]</scope>
    <source>
        <strain evidence="6">Tucson 14024-0371.13</strain>
    </source>
</reference>
<evidence type="ECO:0000250" key="1">
    <source>
        <dbReference type="UniProtKB" id="O76927"/>
    </source>
</evidence>
<evidence type="ECO:0000250" key="2">
    <source>
        <dbReference type="UniProtKB" id="P63220"/>
    </source>
</evidence>
<evidence type="ECO:0000250" key="3">
    <source>
        <dbReference type="UniProtKB" id="P63221"/>
    </source>
</evidence>
<evidence type="ECO:0000255" key="4"/>
<evidence type="ECO:0000305" key="5"/>
<evidence type="ECO:0000312" key="6">
    <source>
        <dbReference type="EMBL" id="EDV30697.1"/>
    </source>
</evidence>
<proteinExistence type="inferred from homology"/>
<gene>
    <name type="primary">RpS21</name>
    <name type="synonym">oho23B</name>
    <name type="ORF">GF14986</name>
</gene>
<comment type="function">
    <text evidence="1">May be an associated component of the ribosome rather than a core structural subunit. May act as a translation initiation factor. Has a role in regulation of cell proliferation in the hematopoietic organs and the imaginal disks of larva (By similarity).</text>
</comment>
<comment type="subunit">
    <text evidence="1">Component of the 40S small ribosomal subunit. Interacts with sta.</text>
</comment>
<comment type="subcellular location">
    <subcellularLocation>
        <location evidence="2">Cytoplasm</location>
        <location evidence="2">Cytosol</location>
    </subcellularLocation>
    <subcellularLocation>
        <location evidence="2">Cytoplasm</location>
    </subcellularLocation>
    <subcellularLocation>
        <location evidence="3">Rough endoplasmic reticulum</location>
    </subcellularLocation>
    <text evidence="2 3">Detected on cytosolic polysomes (By similarity). Detected in ribosomes that are associated with the rough endoplasmic reticulum (By similarity).</text>
</comment>
<comment type="similarity">
    <text evidence="4">Belongs to the eukaryotic ribosomal protein eS21 family.</text>
</comment>
<protein>
    <recommendedName>
        <fullName evidence="5">Small ribosomal subunit protein eS21</fullName>
    </recommendedName>
    <alternativeName>
        <fullName evidence="1">40S ribosomal protein S21</fullName>
    </alternativeName>
    <alternativeName>
        <fullName evidence="1">Overgrown hematopoietic organs at 23B</fullName>
    </alternativeName>
</protein>
<sequence>MENDAGENVDLYVPRKCSASNRIIHAKDHASVQLSIVDVDPETGRQTDGSKTYAICGEIRRMGESDDCIVRLAKKDGLITKNF</sequence>
<feature type="chain" id="PRO_0000395415" description="Small ribosomal subunit protein eS21">
    <location>
        <begin position="1"/>
        <end position="83"/>
    </location>
</feature>
<organism>
    <name type="scientific">Drosophila ananassae</name>
    <name type="common">Fruit fly</name>
    <dbReference type="NCBI Taxonomy" id="7217"/>
    <lineage>
        <taxon>Eukaryota</taxon>
        <taxon>Metazoa</taxon>
        <taxon>Ecdysozoa</taxon>
        <taxon>Arthropoda</taxon>
        <taxon>Hexapoda</taxon>
        <taxon>Insecta</taxon>
        <taxon>Pterygota</taxon>
        <taxon>Neoptera</taxon>
        <taxon>Endopterygota</taxon>
        <taxon>Diptera</taxon>
        <taxon>Brachycera</taxon>
        <taxon>Muscomorpha</taxon>
        <taxon>Ephydroidea</taxon>
        <taxon>Drosophilidae</taxon>
        <taxon>Drosophila</taxon>
        <taxon>Sophophora</taxon>
    </lineage>
</organism>
<dbReference type="EMBL" id="CH902620">
    <property type="protein sequence ID" value="EDV30697.1"/>
    <property type="molecule type" value="Genomic_DNA"/>
</dbReference>
<dbReference type="SMR" id="B3MLA8"/>
<dbReference type="FunCoup" id="B3MLA8">
    <property type="interactions" value="1399"/>
</dbReference>
<dbReference type="STRING" id="7217.B3MLA8"/>
<dbReference type="EnsemblMetazoa" id="FBtr0119686">
    <property type="protein sequence ID" value="FBpp0118178"/>
    <property type="gene ID" value="FBgn0092011"/>
</dbReference>
<dbReference type="EnsemblMetazoa" id="XM_001961440.4">
    <property type="protein sequence ID" value="XP_001961476.1"/>
    <property type="gene ID" value="LOC6497801"/>
</dbReference>
<dbReference type="GeneID" id="6497801"/>
<dbReference type="KEGG" id="dan:6497801"/>
<dbReference type="CTD" id="6227"/>
<dbReference type="eggNOG" id="KOG3486">
    <property type="taxonomic scope" value="Eukaryota"/>
</dbReference>
<dbReference type="HOGENOM" id="CLU_167122_2_0_1"/>
<dbReference type="InParanoid" id="B3MLA8"/>
<dbReference type="OMA" id="GESDACM"/>
<dbReference type="OrthoDB" id="278325at2759"/>
<dbReference type="PhylomeDB" id="B3MLA8"/>
<dbReference type="ChiTaRS" id="RpS21">
    <property type="organism name" value="fly"/>
</dbReference>
<dbReference type="Proteomes" id="UP000007801">
    <property type="component" value="Unassembled WGS sequence"/>
</dbReference>
<dbReference type="GO" id="GO:0022626">
    <property type="term" value="C:cytosolic ribosome"/>
    <property type="evidence" value="ECO:0007669"/>
    <property type="project" value="EnsemblMetazoa"/>
</dbReference>
<dbReference type="GO" id="GO:1990904">
    <property type="term" value="C:ribonucleoprotein complex"/>
    <property type="evidence" value="ECO:0007669"/>
    <property type="project" value="UniProtKB-KW"/>
</dbReference>
<dbReference type="GO" id="GO:0005840">
    <property type="term" value="C:ribosome"/>
    <property type="evidence" value="ECO:0000250"/>
    <property type="project" value="UniProtKB"/>
</dbReference>
<dbReference type="GO" id="GO:0005791">
    <property type="term" value="C:rough endoplasmic reticulum"/>
    <property type="evidence" value="ECO:0007669"/>
    <property type="project" value="UniProtKB-SubCell"/>
</dbReference>
<dbReference type="GO" id="GO:0043022">
    <property type="term" value="F:ribosome binding"/>
    <property type="evidence" value="ECO:0000250"/>
    <property type="project" value="UniProtKB"/>
</dbReference>
<dbReference type="GO" id="GO:0003735">
    <property type="term" value="F:structural constituent of ribosome"/>
    <property type="evidence" value="ECO:0007669"/>
    <property type="project" value="EnsemblMetazoa"/>
</dbReference>
<dbReference type="GO" id="GO:0048542">
    <property type="term" value="P:lymph gland development"/>
    <property type="evidence" value="ECO:0007669"/>
    <property type="project" value="EnsemblMetazoa"/>
</dbReference>
<dbReference type="GO" id="GO:0042127">
    <property type="term" value="P:regulation of cell population proliferation"/>
    <property type="evidence" value="ECO:0000250"/>
    <property type="project" value="UniProtKB"/>
</dbReference>
<dbReference type="GO" id="GO:0006417">
    <property type="term" value="P:regulation of translation"/>
    <property type="evidence" value="ECO:0007669"/>
    <property type="project" value="UniProtKB-KW"/>
</dbReference>
<dbReference type="GO" id="GO:0006364">
    <property type="term" value="P:rRNA processing"/>
    <property type="evidence" value="ECO:0007669"/>
    <property type="project" value="UniProtKB-KW"/>
</dbReference>
<dbReference type="GO" id="GO:0006412">
    <property type="term" value="P:translation"/>
    <property type="evidence" value="ECO:0007669"/>
    <property type="project" value="InterPro"/>
</dbReference>
<dbReference type="FunFam" id="3.30.1230.20:FF:000001">
    <property type="entry name" value="40S ribosomal protein S21"/>
    <property type="match status" value="1"/>
</dbReference>
<dbReference type="Gene3D" id="3.30.1230.20">
    <property type="match status" value="1"/>
</dbReference>
<dbReference type="InterPro" id="IPR001931">
    <property type="entry name" value="Ribosomal_eS21"/>
</dbReference>
<dbReference type="InterPro" id="IPR018279">
    <property type="entry name" value="Ribosomal_eS21_CS"/>
</dbReference>
<dbReference type="InterPro" id="IPR038579">
    <property type="entry name" value="Ribosomal_eS21_sf"/>
</dbReference>
<dbReference type="PANTHER" id="PTHR10442">
    <property type="entry name" value="40S RIBOSOMAL PROTEIN S21"/>
    <property type="match status" value="1"/>
</dbReference>
<dbReference type="Pfam" id="PF01249">
    <property type="entry name" value="Ribosomal_S21e"/>
    <property type="match status" value="1"/>
</dbReference>
<dbReference type="PIRSF" id="PIRSF002148">
    <property type="entry name" value="Ribosomal_S21e"/>
    <property type="match status" value="1"/>
</dbReference>
<dbReference type="PROSITE" id="PS00996">
    <property type="entry name" value="RIBOSOMAL_S21E"/>
    <property type="match status" value="1"/>
</dbReference>
<keyword id="KW-0963">Cytoplasm</keyword>
<keyword id="KW-0217">Developmental protein</keyword>
<keyword id="KW-0256">Endoplasmic reticulum</keyword>
<keyword id="KW-1185">Reference proteome</keyword>
<keyword id="KW-0687">Ribonucleoprotein</keyword>
<keyword id="KW-0689">Ribosomal protein</keyword>
<keyword id="KW-0698">rRNA processing</keyword>
<keyword id="KW-0810">Translation regulation</keyword>